<name>PYRF_STRA5</name>
<accession>Q8DZQ2</accession>
<sequence length="233" mass="25994">MLEKCPIIALDFSDLASVTTFLEHFPKEELLFVKIGMELYYSEGPSIIRYIKSLGHRIFLDLKLHDIPNTVRSSMSVLAKLGIDMTNVHAAGGVEMMKAAREGLGKGPILLAVTQLTSTSQEQMQVDQHINLSVVDSVCHYAQKAQEAGLDGVVASAQEGMQIKKQTNEHFICLTPGIRPPQTNQLDDQKRTMTPEQARIVGADYIVVGRPITKAENPYQAYLEIKEEWNRIK</sequence>
<gene>
    <name evidence="1" type="primary">pyrF</name>
    <name type="ordered locus">SAG1047</name>
</gene>
<keyword id="KW-0210">Decarboxylase</keyword>
<keyword id="KW-0456">Lyase</keyword>
<keyword id="KW-0665">Pyrimidine biosynthesis</keyword>
<keyword id="KW-1185">Reference proteome</keyword>
<feature type="chain" id="PRO_0000134585" description="Orotidine 5'-phosphate decarboxylase">
    <location>
        <begin position="1"/>
        <end position="233"/>
    </location>
</feature>
<feature type="active site" description="Proton donor" evidence="1">
    <location>
        <position position="63"/>
    </location>
</feature>
<feature type="binding site" evidence="1">
    <location>
        <position position="11"/>
    </location>
    <ligand>
        <name>substrate</name>
    </ligand>
</feature>
<feature type="binding site" evidence="1">
    <location>
        <position position="34"/>
    </location>
    <ligand>
        <name>substrate</name>
    </ligand>
</feature>
<feature type="binding site" evidence="1">
    <location>
        <begin position="61"/>
        <end position="70"/>
    </location>
    <ligand>
        <name>substrate</name>
    </ligand>
</feature>
<feature type="binding site" evidence="1">
    <location>
        <position position="117"/>
    </location>
    <ligand>
        <name>substrate</name>
    </ligand>
</feature>
<feature type="binding site" evidence="1">
    <location>
        <position position="179"/>
    </location>
    <ligand>
        <name>substrate</name>
    </ligand>
</feature>
<feature type="binding site" evidence="1">
    <location>
        <position position="189"/>
    </location>
    <ligand>
        <name>substrate</name>
    </ligand>
</feature>
<feature type="binding site" evidence="1">
    <location>
        <position position="209"/>
    </location>
    <ligand>
        <name>substrate</name>
    </ligand>
</feature>
<feature type="binding site" evidence="1">
    <location>
        <position position="210"/>
    </location>
    <ligand>
        <name>substrate</name>
    </ligand>
</feature>
<comment type="function">
    <text evidence="1">Catalyzes the decarboxylation of orotidine 5'-monophosphate (OMP) to uridine 5'-monophosphate (UMP).</text>
</comment>
<comment type="catalytic activity">
    <reaction evidence="1">
        <text>orotidine 5'-phosphate + H(+) = UMP + CO2</text>
        <dbReference type="Rhea" id="RHEA:11596"/>
        <dbReference type="ChEBI" id="CHEBI:15378"/>
        <dbReference type="ChEBI" id="CHEBI:16526"/>
        <dbReference type="ChEBI" id="CHEBI:57538"/>
        <dbReference type="ChEBI" id="CHEBI:57865"/>
        <dbReference type="EC" id="4.1.1.23"/>
    </reaction>
</comment>
<comment type="pathway">
    <text evidence="1">Pyrimidine metabolism; UMP biosynthesis via de novo pathway; UMP from orotate: step 2/2.</text>
</comment>
<comment type="subunit">
    <text evidence="1">Homodimer.</text>
</comment>
<comment type="similarity">
    <text evidence="1">Belongs to the OMP decarboxylase family. Type 1 subfamily.</text>
</comment>
<evidence type="ECO:0000255" key="1">
    <source>
        <dbReference type="HAMAP-Rule" id="MF_01200"/>
    </source>
</evidence>
<reference key="1">
    <citation type="journal article" date="2002" name="Proc. Natl. Acad. Sci. U.S.A.">
        <title>Complete genome sequence and comparative genomic analysis of an emerging human pathogen, serotype V Streptococcus agalactiae.</title>
        <authorList>
            <person name="Tettelin H."/>
            <person name="Masignani V."/>
            <person name="Cieslewicz M.J."/>
            <person name="Eisen J.A."/>
            <person name="Peterson S.N."/>
            <person name="Wessels M.R."/>
            <person name="Paulsen I.T."/>
            <person name="Nelson K.E."/>
            <person name="Margarit I."/>
            <person name="Read T.D."/>
            <person name="Madoff L.C."/>
            <person name="Wolf A.M."/>
            <person name="Beanan M.J."/>
            <person name="Brinkac L.M."/>
            <person name="Daugherty S.C."/>
            <person name="DeBoy R.T."/>
            <person name="Durkin A.S."/>
            <person name="Kolonay J.F."/>
            <person name="Madupu R."/>
            <person name="Lewis M.R."/>
            <person name="Radune D."/>
            <person name="Fedorova N.B."/>
            <person name="Scanlan D."/>
            <person name="Khouri H.M."/>
            <person name="Mulligan S."/>
            <person name="Carty H.A."/>
            <person name="Cline R.T."/>
            <person name="Van Aken S.E."/>
            <person name="Gill J."/>
            <person name="Scarselli M."/>
            <person name="Mora M."/>
            <person name="Iacobini E.T."/>
            <person name="Brettoni C."/>
            <person name="Galli G."/>
            <person name="Mariani M."/>
            <person name="Vegni F."/>
            <person name="Maione D."/>
            <person name="Rinaudo D."/>
            <person name="Rappuoli R."/>
            <person name="Telford J.L."/>
            <person name="Kasper D.L."/>
            <person name="Grandi G."/>
            <person name="Fraser C.M."/>
        </authorList>
    </citation>
    <scope>NUCLEOTIDE SEQUENCE [LARGE SCALE GENOMIC DNA]</scope>
    <source>
        <strain>ATCC BAA-611 / 2603 V/R</strain>
    </source>
</reference>
<dbReference type="EC" id="4.1.1.23" evidence="1"/>
<dbReference type="EMBL" id="AE009948">
    <property type="protein sequence ID" value="AAM99929.1"/>
    <property type="molecule type" value="Genomic_DNA"/>
</dbReference>
<dbReference type="RefSeq" id="NP_688057.1">
    <property type="nucleotide sequence ID" value="NC_004116.1"/>
</dbReference>
<dbReference type="RefSeq" id="WP_000890178.1">
    <property type="nucleotide sequence ID" value="NC_004116.1"/>
</dbReference>
<dbReference type="SMR" id="Q8DZQ2"/>
<dbReference type="STRING" id="208435.SAG1047"/>
<dbReference type="KEGG" id="sag:SAG1047"/>
<dbReference type="PATRIC" id="fig|208435.3.peg.1058"/>
<dbReference type="HOGENOM" id="CLU_067069_1_1_9"/>
<dbReference type="OrthoDB" id="9806203at2"/>
<dbReference type="UniPathway" id="UPA00070">
    <property type="reaction ID" value="UER00120"/>
</dbReference>
<dbReference type="Proteomes" id="UP000000821">
    <property type="component" value="Chromosome"/>
</dbReference>
<dbReference type="GO" id="GO:0005829">
    <property type="term" value="C:cytosol"/>
    <property type="evidence" value="ECO:0007669"/>
    <property type="project" value="TreeGrafter"/>
</dbReference>
<dbReference type="GO" id="GO:0004590">
    <property type="term" value="F:orotidine-5'-phosphate decarboxylase activity"/>
    <property type="evidence" value="ECO:0007669"/>
    <property type="project" value="UniProtKB-UniRule"/>
</dbReference>
<dbReference type="GO" id="GO:0006207">
    <property type="term" value="P:'de novo' pyrimidine nucleobase biosynthetic process"/>
    <property type="evidence" value="ECO:0007669"/>
    <property type="project" value="InterPro"/>
</dbReference>
<dbReference type="GO" id="GO:0044205">
    <property type="term" value="P:'de novo' UMP biosynthetic process"/>
    <property type="evidence" value="ECO:0007669"/>
    <property type="project" value="UniProtKB-UniRule"/>
</dbReference>
<dbReference type="CDD" id="cd04725">
    <property type="entry name" value="OMP_decarboxylase_like"/>
    <property type="match status" value="1"/>
</dbReference>
<dbReference type="FunFam" id="3.20.20.70:FF:000015">
    <property type="entry name" value="Orotidine 5'-phosphate decarboxylase"/>
    <property type="match status" value="1"/>
</dbReference>
<dbReference type="Gene3D" id="3.20.20.70">
    <property type="entry name" value="Aldolase class I"/>
    <property type="match status" value="1"/>
</dbReference>
<dbReference type="HAMAP" id="MF_01200_B">
    <property type="entry name" value="OMPdecase_type1_B"/>
    <property type="match status" value="1"/>
</dbReference>
<dbReference type="InterPro" id="IPR013785">
    <property type="entry name" value="Aldolase_TIM"/>
</dbReference>
<dbReference type="InterPro" id="IPR014732">
    <property type="entry name" value="OMPdecase"/>
</dbReference>
<dbReference type="InterPro" id="IPR018089">
    <property type="entry name" value="OMPdecase_AS"/>
</dbReference>
<dbReference type="InterPro" id="IPR047596">
    <property type="entry name" value="OMPdecase_bac"/>
</dbReference>
<dbReference type="InterPro" id="IPR001754">
    <property type="entry name" value="OMPdeCOase_dom"/>
</dbReference>
<dbReference type="InterPro" id="IPR011060">
    <property type="entry name" value="RibuloseP-bd_barrel"/>
</dbReference>
<dbReference type="NCBIfam" id="NF001273">
    <property type="entry name" value="PRK00230.1"/>
    <property type="match status" value="1"/>
</dbReference>
<dbReference type="NCBIfam" id="TIGR01740">
    <property type="entry name" value="pyrF"/>
    <property type="match status" value="1"/>
</dbReference>
<dbReference type="PANTHER" id="PTHR32119">
    <property type="entry name" value="OROTIDINE 5'-PHOSPHATE DECARBOXYLASE"/>
    <property type="match status" value="1"/>
</dbReference>
<dbReference type="PANTHER" id="PTHR32119:SF2">
    <property type="entry name" value="OROTIDINE 5'-PHOSPHATE DECARBOXYLASE"/>
    <property type="match status" value="1"/>
</dbReference>
<dbReference type="Pfam" id="PF00215">
    <property type="entry name" value="OMPdecase"/>
    <property type="match status" value="1"/>
</dbReference>
<dbReference type="SMART" id="SM00934">
    <property type="entry name" value="OMPdecase"/>
    <property type="match status" value="1"/>
</dbReference>
<dbReference type="SUPFAM" id="SSF51366">
    <property type="entry name" value="Ribulose-phoshate binding barrel"/>
    <property type="match status" value="1"/>
</dbReference>
<dbReference type="PROSITE" id="PS00156">
    <property type="entry name" value="OMPDECASE"/>
    <property type="match status" value="1"/>
</dbReference>
<proteinExistence type="inferred from homology"/>
<protein>
    <recommendedName>
        <fullName evidence="1">Orotidine 5'-phosphate decarboxylase</fullName>
        <ecNumber evidence="1">4.1.1.23</ecNumber>
    </recommendedName>
    <alternativeName>
        <fullName evidence="1">OMP decarboxylase</fullName>
        <shortName evidence="1">OMPDCase</shortName>
        <shortName evidence="1">OMPdecase</shortName>
    </alternativeName>
</protein>
<organism>
    <name type="scientific">Streptococcus agalactiae serotype V (strain ATCC BAA-611 / 2603 V/R)</name>
    <dbReference type="NCBI Taxonomy" id="208435"/>
    <lineage>
        <taxon>Bacteria</taxon>
        <taxon>Bacillati</taxon>
        <taxon>Bacillota</taxon>
        <taxon>Bacilli</taxon>
        <taxon>Lactobacillales</taxon>
        <taxon>Streptococcaceae</taxon>
        <taxon>Streptococcus</taxon>
    </lineage>
</organism>